<accession>Q4QJL8</accession>
<reference key="1">
    <citation type="journal article" date="2005" name="J. Bacteriol.">
        <title>Genomic sequence of an otitis media isolate of nontypeable Haemophilus influenzae: comparative study with H. influenzae serotype d, strain KW20.</title>
        <authorList>
            <person name="Harrison A."/>
            <person name="Dyer D.W."/>
            <person name="Gillaspy A."/>
            <person name="Ray W.C."/>
            <person name="Mungur R."/>
            <person name="Carson M.B."/>
            <person name="Zhong H."/>
            <person name="Gipson J."/>
            <person name="Gipson M."/>
            <person name="Johnson L.S."/>
            <person name="Lewis L."/>
            <person name="Bakaletz L.O."/>
            <person name="Munson R.S. Jr."/>
        </authorList>
    </citation>
    <scope>NUCLEOTIDE SEQUENCE [LARGE SCALE GENOMIC DNA]</scope>
    <source>
        <strain>86-028NP</strain>
    </source>
</reference>
<feature type="chain" id="PRO_0000185015" description="5-oxoprolinase subunit A">
    <location>
        <begin position="1"/>
        <end position="245"/>
    </location>
</feature>
<name>PXPA_HAEI8</name>
<sequence>MKKIDLNADIAEGFPFDESLLQLLSSANIACGLHAGGAKEMQSAVKFAKENKVRIGAHPSFPDRENFGRTAMALSSQELIAHLRYQLGALKAICDGEGAVISYVKPHGALYNQAAKDEKIARVIAQTVYQFDPNLKLMGLAGSLMLRIAEEEKLQTISEVFADRHYMPDGSLVPRSQPNAMVESDKEAIQQVLQMVTKGQVNAIDGSLVPVKAESICLHGDNQHSLQFAKRIVEELEKNHIKITA</sequence>
<protein>
    <recommendedName>
        <fullName evidence="1">5-oxoprolinase subunit A</fullName>
        <shortName evidence="1">5-OPase subunit A</shortName>
        <ecNumber evidence="1">3.5.2.9</ecNumber>
    </recommendedName>
    <alternativeName>
        <fullName evidence="1">5-oxoprolinase (ATP-hydrolyzing) subunit A</fullName>
    </alternativeName>
</protein>
<organism>
    <name type="scientific">Haemophilus influenzae (strain 86-028NP)</name>
    <dbReference type="NCBI Taxonomy" id="281310"/>
    <lineage>
        <taxon>Bacteria</taxon>
        <taxon>Pseudomonadati</taxon>
        <taxon>Pseudomonadota</taxon>
        <taxon>Gammaproteobacteria</taxon>
        <taxon>Pasteurellales</taxon>
        <taxon>Pasteurellaceae</taxon>
        <taxon>Haemophilus</taxon>
    </lineage>
</organism>
<keyword id="KW-0067">ATP-binding</keyword>
<keyword id="KW-0378">Hydrolase</keyword>
<keyword id="KW-0547">Nucleotide-binding</keyword>
<evidence type="ECO:0000255" key="1">
    <source>
        <dbReference type="HAMAP-Rule" id="MF_00691"/>
    </source>
</evidence>
<gene>
    <name evidence="1" type="primary">pxpA</name>
    <name type="ordered locus">NTHI2036</name>
</gene>
<comment type="function">
    <text evidence="1">Catalyzes the cleavage of 5-oxoproline to form L-glutamate coupled to the hydrolysis of ATP to ADP and inorganic phosphate.</text>
</comment>
<comment type="catalytic activity">
    <reaction evidence="1">
        <text>5-oxo-L-proline + ATP + 2 H2O = L-glutamate + ADP + phosphate + H(+)</text>
        <dbReference type="Rhea" id="RHEA:10348"/>
        <dbReference type="ChEBI" id="CHEBI:15377"/>
        <dbReference type="ChEBI" id="CHEBI:15378"/>
        <dbReference type="ChEBI" id="CHEBI:29985"/>
        <dbReference type="ChEBI" id="CHEBI:30616"/>
        <dbReference type="ChEBI" id="CHEBI:43474"/>
        <dbReference type="ChEBI" id="CHEBI:58402"/>
        <dbReference type="ChEBI" id="CHEBI:456216"/>
        <dbReference type="EC" id="3.5.2.9"/>
    </reaction>
</comment>
<comment type="subunit">
    <text evidence="1">Forms a complex composed of PxpA, PxpB and PxpC.</text>
</comment>
<comment type="similarity">
    <text evidence="1">Belongs to the LamB/PxpA family.</text>
</comment>
<dbReference type="EC" id="3.5.2.9" evidence="1"/>
<dbReference type="EMBL" id="CP000057">
    <property type="protein sequence ID" value="AAX88779.1"/>
    <property type="molecule type" value="Genomic_DNA"/>
</dbReference>
<dbReference type="RefSeq" id="WP_005688057.1">
    <property type="nucleotide sequence ID" value="NC_007146.2"/>
</dbReference>
<dbReference type="SMR" id="Q4QJL8"/>
<dbReference type="GeneID" id="93220736"/>
<dbReference type="KEGG" id="hit:NTHI2036"/>
<dbReference type="HOGENOM" id="CLU_069535_0_0_6"/>
<dbReference type="Proteomes" id="UP000002525">
    <property type="component" value="Chromosome"/>
</dbReference>
<dbReference type="GO" id="GO:0017168">
    <property type="term" value="F:5-oxoprolinase (ATP-hydrolyzing) activity"/>
    <property type="evidence" value="ECO:0007669"/>
    <property type="project" value="UniProtKB-UniRule"/>
</dbReference>
<dbReference type="GO" id="GO:0005524">
    <property type="term" value="F:ATP binding"/>
    <property type="evidence" value="ECO:0007669"/>
    <property type="project" value="UniProtKB-UniRule"/>
</dbReference>
<dbReference type="GO" id="GO:0005975">
    <property type="term" value="P:carbohydrate metabolic process"/>
    <property type="evidence" value="ECO:0007669"/>
    <property type="project" value="InterPro"/>
</dbReference>
<dbReference type="CDD" id="cd10800">
    <property type="entry name" value="LamB_YcsF_YbgL_like"/>
    <property type="match status" value="1"/>
</dbReference>
<dbReference type="Gene3D" id="3.20.20.370">
    <property type="entry name" value="Glycoside hydrolase/deacetylase"/>
    <property type="match status" value="1"/>
</dbReference>
<dbReference type="HAMAP" id="MF_00691">
    <property type="entry name" value="PxpA"/>
    <property type="match status" value="1"/>
</dbReference>
<dbReference type="InterPro" id="IPR011330">
    <property type="entry name" value="Glyco_hydro/deAcase_b/a-brl"/>
</dbReference>
<dbReference type="InterPro" id="IPR005501">
    <property type="entry name" value="LamB/YcsF/PxpA-like"/>
</dbReference>
<dbReference type="NCBIfam" id="NF003814">
    <property type="entry name" value="PRK05406.1-3"/>
    <property type="match status" value="1"/>
</dbReference>
<dbReference type="NCBIfam" id="NF003815">
    <property type="entry name" value="PRK05406.1-4"/>
    <property type="match status" value="1"/>
</dbReference>
<dbReference type="NCBIfam" id="NF003816">
    <property type="entry name" value="PRK05406.1-5"/>
    <property type="match status" value="1"/>
</dbReference>
<dbReference type="PANTHER" id="PTHR30292:SF0">
    <property type="entry name" value="5-OXOPROLINASE SUBUNIT A"/>
    <property type="match status" value="1"/>
</dbReference>
<dbReference type="PANTHER" id="PTHR30292">
    <property type="entry name" value="UNCHARACTERIZED PROTEIN YBGL-RELATED"/>
    <property type="match status" value="1"/>
</dbReference>
<dbReference type="Pfam" id="PF03746">
    <property type="entry name" value="LamB_YcsF"/>
    <property type="match status" value="1"/>
</dbReference>
<dbReference type="SUPFAM" id="SSF88713">
    <property type="entry name" value="Glycoside hydrolase/deacetylase"/>
    <property type="match status" value="1"/>
</dbReference>
<proteinExistence type="inferred from homology"/>